<gene>
    <name type="ordered locus">YCL042W</name>
    <name type="ORF">YCL42W</name>
</gene>
<evidence type="ECO:0000256" key="1">
    <source>
        <dbReference type="SAM" id="MobiDB-lite"/>
    </source>
</evidence>
<feature type="chain" id="PRO_0000202545" description="Putative uncharacterized protein YCL042W">
    <location>
        <begin position="1"/>
        <end position="119"/>
    </location>
</feature>
<feature type="region of interest" description="Disordered" evidence="1">
    <location>
        <begin position="55"/>
        <end position="119"/>
    </location>
</feature>
<feature type="compositionally biased region" description="Polar residues" evidence="1">
    <location>
        <begin position="81"/>
        <end position="92"/>
    </location>
</feature>
<reference key="1">
    <citation type="journal article" date="1992" name="Nature">
        <title>The complete DNA sequence of yeast chromosome III.</title>
        <authorList>
            <person name="Oliver S.G."/>
            <person name="van der Aart Q.J.M."/>
            <person name="Agostoni-Carbone M.L."/>
            <person name="Aigle M."/>
            <person name="Alberghina L."/>
            <person name="Alexandraki D."/>
            <person name="Antoine G."/>
            <person name="Anwar R."/>
            <person name="Ballesta J.P.G."/>
            <person name="Benit P."/>
            <person name="Berben G."/>
            <person name="Bergantino E."/>
            <person name="Biteau N."/>
            <person name="Bolle P.-A."/>
            <person name="Bolotin-Fukuhara M."/>
            <person name="Brown A."/>
            <person name="Brown A.J.P."/>
            <person name="Buhler J.-M."/>
            <person name="Carcano C."/>
            <person name="Carignani G."/>
            <person name="Cederberg H."/>
            <person name="Chanet R."/>
            <person name="Contreras R."/>
            <person name="Crouzet M."/>
            <person name="Daignan-Fornier B."/>
            <person name="Defoor E."/>
            <person name="Delgado M.D."/>
            <person name="Demolder J."/>
            <person name="Doira C."/>
            <person name="Dubois E."/>
            <person name="Dujon B."/>
            <person name="Duesterhoeft A."/>
            <person name="Erdmann D."/>
            <person name="Esteban M."/>
            <person name="Fabre F."/>
            <person name="Fairhead C."/>
            <person name="Faye G."/>
            <person name="Feldmann H."/>
            <person name="Fiers W."/>
            <person name="Francingues-Gaillard M.-C."/>
            <person name="Franco L."/>
            <person name="Frontali L."/>
            <person name="Fukuhara H."/>
            <person name="Fuller L.J."/>
            <person name="Galland P."/>
            <person name="Gent M.E."/>
            <person name="Gigot D."/>
            <person name="Gilliquet V."/>
            <person name="Glansdorff N."/>
            <person name="Goffeau A."/>
            <person name="Grenson M."/>
            <person name="Grisanti P."/>
            <person name="Grivell L.A."/>
            <person name="de Haan M."/>
            <person name="Haasemann M."/>
            <person name="Hatat D."/>
            <person name="Hoenicka J."/>
            <person name="Hegemann J.H."/>
            <person name="Herbert C.J."/>
            <person name="Hilger F."/>
            <person name="Hohmann S."/>
            <person name="Hollenberg C.P."/>
            <person name="Huse K."/>
            <person name="Iborra F."/>
            <person name="Indge K.J."/>
            <person name="Isono K."/>
            <person name="Jacq C."/>
            <person name="Jacquet M."/>
            <person name="James C.M."/>
            <person name="Jauniaux J.-C."/>
            <person name="Jia Y."/>
            <person name="Jimenez A."/>
            <person name="Kelly A."/>
            <person name="Kleinhans U."/>
            <person name="Kreisl P."/>
            <person name="Lanfranchi G."/>
            <person name="Lewis C."/>
            <person name="van der Linden C.G."/>
            <person name="Lucchini G."/>
            <person name="Lutzenkirchen K."/>
            <person name="Maat M.J."/>
            <person name="Mallet L."/>
            <person name="Mannhaupt G."/>
            <person name="Martegani E."/>
            <person name="Mathieu A."/>
            <person name="Maurer C.T.C."/>
            <person name="McConnell D."/>
            <person name="McKee R.A."/>
            <person name="Messenguy F."/>
            <person name="Mewes H.-W."/>
            <person name="Molemans F."/>
            <person name="Montague M.A."/>
            <person name="Muzi Falconi M."/>
            <person name="Navas L."/>
            <person name="Newlon C.S."/>
            <person name="Noone D."/>
            <person name="Pallier C."/>
            <person name="Panzeri L."/>
            <person name="Pearson B.M."/>
            <person name="Perea J."/>
            <person name="Philippsen P."/>
            <person name="Pierard A."/>
            <person name="Planta R.J."/>
            <person name="Plevani P."/>
            <person name="Poetsch B."/>
            <person name="Pohl F.M."/>
            <person name="Purnelle B."/>
            <person name="Ramezani Rad M."/>
            <person name="Rasmussen S.W."/>
            <person name="Raynal A."/>
            <person name="Remacha M.A."/>
            <person name="Richterich P."/>
            <person name="Roberts A.B."/>
            <person name="Rodriguez F."/>
            <person name="Sanz E."/>
            <person name="Schaaff-Gerstenschlaeger I."/>
            <person name="Scherens B."/>
            <person name="Schweitzer B."/>
            <person name="Shu Y."/>
            <person name="Skala J."/>
            <person name="Slonimski P.P."/>
            <person name="Sor F."/>
            <person name="Soustelle C."/>
            <person name="Spiegelberg R."/>
            <person name="Stateva L.I."/>
            <person name="Steensma H.Y."/>
            <person name="Steiner S."/>
            <person name="Thierry A."/>
            <person name="Thireos G."/>
            <person name="Tzermia M."/>
            <person name="Urrestarazu L.A."/>
            <person name="Valle G."/>
            <person name="Vetter I."/>
            <person name="van Vliet-Reedijk J.C."/>
            <person name="Voet M."/>
            <person name="Volckaert G."/>
            <person name="Vreken P."/>
            <person name="Wang H."/>
            <person name="Warmington J.R."/>
            <person name="von Wettstein D."/>
            <person name="Wicksteed B.L."/>
            <person name="Wilson C."/>
            <person name="Wurst H."/>
            <person name="Xu G."/>
            <person name="Yoshikawa A."/>
            <person name="Zimmermann F.K."/>
            <person name="Sgouros J.G."/>
        </authorList>
    </citation>
    <scope>NUCLEOTIDE SEQUENCE [LARGE SCALE GENOMIC DNA]</scope>
    <source>
        <strain>ATCC 204508 / S288c</strain>
    </source>
</reference>
<reference key="2">
    <citation type="submission" date="2001-06" db="EMBL/GenBank/DDBJ databases">
        <authorList>
            <person name="Valles G."/>
            <person name="Volckaerts G."/>
        </authorList>
    </citation>
    <scope>SEQUENCE REVISION</scope>
</reference>
<reference key="3">
    <citation type="journal article" date="2014" name="G3 (Bethesda)">
        <title>The reference genome sequence of Saccharomyces cerevisiae: Then and now.</title>
        <authorList>
            <person name="Engel S.R."/>
            <person name="Dietrich F.S."/>
            <person name="Fisk D.G."/>
            <person name="Binkley G."/>
            <person name="Balakrishnan R."/>
            <person name="Costanzo M.C."/>
            <person name="Dwight S.S."/>
            <person name="Hitz B.C."/>
            <person name="Karra K."/>
            <person name="Nash R.S."/>
            <person name="Weng S."/>
            <person name="Wong E.D."/>
            <person name="Lloyd P."/>
            <person name="Skrzypek M.S."/>
            <person name="Miyasato S.R."/>
            <person name="Simison M."/>
            <person name="Cherry J.M."/>
        </authorList>
    </citation>
    <scope>GENOME REANNOTATION</scope>
    <source>
        <strain>ATCC 204508 / S288c</strain>
    </source>
</reference>
<dbReference type="EMBL" id="X59720">
    <property type="protein sequence ID" value="CAC42956.1"/>
    <property type="molecule type" value="Genomic_DNA"/>
</dbReference>
<dbReference type="EMBL" id="BK006937">
    <property type="protein sequence ID" value="DAA07443.1"/>
    <property type="molecule type" value="Genomic_DNA"/>
</dbReference>
<dbReference type="PIR" id="S19371">
    <property type="entry name" value="S19371"/>
</dbReference>
<dbReference type="RefSeq" id="NP_009889.2">
    <property type="nucleotide sequence ID" value="NM_001178687.1"/>
</dbReference>
<dbReference type="BioGRID" id="30942">
    <property type="interactions" value="26"/>
</dbReference>
<dbReference type="DIP" id="DIP-6571N"/>
<dbReference type="FunCoup" id="P25572">
    <property type="interactions" value="164"/>
</dbReference>
<dbReference type="IntAct" id="P25572">
    <property type="interactions" value="3"/>
</dbReference>
<dbReference type="STRING" id="4932.YCL042W"/>
<dbReference type="GlyGen" id="P25572">
    <property type="glycosylation" value="1 site"/>
</dbReference>
<dbReference type="PaxDb" id="4932-YCL042W"/>
<dbReference type="PeptideAtlas" id="P25572"/>
<dbReference type="EnsemblFungi" id="YCL042W_mRNA">
    <property type="protein sequence ID" value="YCL042W"/>
    <property type="gene ID" value="YCL042W"/>
</dbReference>
<dbReference type="GeneID" id="850315"/>
<dbReference type="KEGG" id="sce:YCL042W"/>
<dbReference type="AGR" id="SGD:S000000547"/>
<dbReference type="SGD" id="S000000547">
    <property type="gene designation" value="YCL042W"/>
</dbReference>
<dbReference type="VEuPathDB" id="FungiDB:YCL042W"/>
<dbReference type="HOGENOM" id="CLU_2063319_0_0_1"/>
<dbReference type="InParanoid" id="P25572"/>
<dbReference type="BioCyc" id="YEAST:G3O-29299-MONOMER"/>
<dbReference type="BioGRID-ORCS" id="850315">
    <property type="hits" value="0 hits in 10 CRISPR screens"/>
</dbReference>
<dbReference type="PRO" id="PR:P25572"/>
<dbReference type="Proteomes" id="UP000002311">
    <property type="component" value="Chromosome III"/>
</dbReference>
<dbReference type="RNAct" id="P25572">
    <property type="molecule type" value="protein"/>
</dbReference>
<dbReference type="GO" id="GO:0005737">
    <property type="term" value="C:cytoplasm"/>
    <property type="evidence" value="ECO:0007005"/>
    <property type="project" value="SGD"/>
</dbReference>
<keyword id="KW-1185">Reference proteome</keyword>
<organism>
    <name type="scientific">Saccharomyces cerevisiae (strain ATCC 204508 / S288c)</name>
    <name type="common">Baker's yeast</name>
    <dbReference type="NCBI Taxonomy" id="559292"/>
    <lineage>
        <taxon>Eukaryota</taxon>
        <taxon>Fungi</taxon>
        <taxon>Dikarya</taxon>
        <taxon>Ascomycota</taxon>
        <taxon>Saccharomycotina</taxon>
        <taxon>Saccharomycetes</taxon>
        <taxon>Saccharomycetales</taxon>
        <taxon>Saccharomycetaceae</taxon>
        <taxon>Saccharomyces</taxon>
    </lineage>
</organism>
<sequence>MEKKKILDAALAPRIISGVPTDGQPLSGGPLSWAWCHTTLKRWALMKTRPYKYPLSTEPPTPPSVPNSASVNHNTTTNTTLSYTRCHSTTYTKPLRERSSRPWTRSATISRLPPRSWTN</sequence>
<accession>P25572</accession>
<accession>D6VQX4</accession>
<accession>Q8NIN0</accession>
<protein>
    <recommendedName>
        <fullName>Putative uncharacterized protein YCL042W</fullName>
    </recommendedName>
</protein>
<proteinExistence type="predicted"/>
<name>YCE2_YEAST</name>